<protein>
    <recommendedName>
        <fullName evidence="1">ATP synthase subunit alpha</fullName>
        <ecNumber evidence="1">7.1.2.2</ecNumber>
    </recommendedName>
    <alternativeName>
        <fullName evidence="1">ATP synthase F1 sector subunit alpha</fullName>
    </alternativeName>
    <alternativeName>
        <fullName evidence="1">F-ATPase subunit alpha</fullName>
    </alternativeName>
</protein>
<keyword id="KW-0066">ATP synthesis</keyword>
<keyword id="KW-0067">ATP-binding</keyword>
<keyword id="KW-0997">Cell inner membrane</keyword>
<keyword id="KW-1003">Cell membrane</keyword>
<keyword id="KW-0139">CF(1)</keyword>
<keyword id="KW-0375">Hydrogen ion transport</keyword>
<keyword id="KW-0406">Ion transport</keyword>
<keyword id="KW-0472">Membrane</keyword>
<keyword id="KW-0547">Nucleotide-binding</keyword>
<keyword id="KW-1278">Translocase</keyword>
<keyword id="KW-0813">Transport</keyword>
<sequence>MQLNSTEIAELIKKRIEQFNVSSEARNEGTIVAVTDGIIRIHGLADVMQGEMIELPGSRYAIALNLERDSVGAVVMGPYADLKEGDKVQSTGRILEVPVGNALLGRVVNTLGEPIDGKGAIDAAGFEPVEKIAPGVIERQSVDQPVQTGYKSVDAMIPVGRGQRELIIGDRQCGKTAMAVDAIINQKGTGIKCVYVAVGQKASTIANVVRKLEEHGALDHTIVVAASASESAALQYLAPYSGCTMGEYFRDRGEDALIVYDDLSKQAVAYRQISLLLKRPPGREAYPGDVFYLHSRLLERAARVNEQYVENYTNGEVKGKTGSLTALPIIETQAGDVSAFVPTNVISITDGQIFLETDLFNAGIRPAVNAGISVSRVGGAAQTKIIKKLGGGIRLALAQYRELAAFSQFASDLDDATREQLEHGERVTELMKQKQYAPLSIANMGVSLFAVEKGFLKGIELNKILDFEAALHSYMNSEHADLMKTINESGNYNDEIASKLNDALTNFKATQTW</sequence>
<organism>
    <name type="scientific">Alteromonas mediterranea (strain DSM 17117 / CIP 110805 / LMG 28347 / Deep ecotype)</name>
    <dbReference type="NCBI Taxonomy" id="1774373"/>
    <lineage>
        <taxon>Bacteria</taxon>
        <taxon>Pseudomonadati</taxon>
        <taxon>Pseudomonadota</taxon>
        <taxon>Gammaproteobacteria</taxon>
        <taxon>Alteromonadales</taxon>
        <taxon>Alteromonadaceae</taxon>
        <taxon>Alteromonas/Salinimonas group</taxon>
        <taxon>Alteromonas</taxon>
    </lineage>
</organism>
<name>ATPA_ALTMD</name>
<comment type="function">
    <text evidence="1">Produces ATP from ADP in the presence of a proton gradient across the membrane. The alpha chain is a regulatory subunit.</text>
</comment>
<comment type="catalytic activity">
    <reaction evidence="1">
        <text>ATP + H2O + 4 H(+)(in) = ADP + phosphate + 5 H(+)(out)</text>
        <dbReference type="Rhea" id="RHEA:57720"/>
        <dbReference type="ChEBI" id="CHEBI:15377"/>
        <dbReference type="ChEBI" id="CHEBI:15378"/>
        <dbReference type="ChEBI" id="CHEBI:30616"/>
        <dbReference type="ChEBI" id="CHEBI:43474"/>
        <dbReference type="ChEBI" id="CHEBI:456216"/>
        <dbReference type="EC" id="7.1.2.2"/>
    </reaction>
</comment>
<comment type="subunit">
    <text evidence="1">F-type ATPases have 2 components, CF(1) - the catalytic core - and CF(0) - the membrane proton channel. CF(1) has five subunits: alpha(3), beta(3), gamma(1), delta(1), epsilon(1). CF(0) has three main subunits: a(1), b(2) and c(9-12). The alpha and beta chains form an alternating ring which encloses part of the gamma chain. CF(1) is attached to CF(0) by a central stalk formed by the gamma and epsilon chains, while a peripheral stalk is formed by the delta and b chains.</text>
</comment>
<comment type="subcellular location">
    <subcellularLocation>
        <location evidence="1">Cell inner membrane</location>
        <topology evidence="1">Peripheral membrane protein</topology>
    </subcellularLocation>
</comment>
<comment type="similarity">
    <text evidence="1">Belongs to the ATPase alpha/beta chains family.</text>
</comment>
<feature type="chain" id="PRO_1000143337" description="ATP synthase subunit alpha">
    <location>
        <begin position="1"/>
        <end position="513"/>
    </location>
</feature>
<feature type="binding site" evidence="1">
    <location>
        <begin position="169"/>
        <end position="176"/>
    </location>
    <ligand>
        <name>ATP</name>
        <dbReference type="ChEBI" id="CHEBI:30616"/>
    </ligand>
</feature>
<feature type="site" description="Required for activity" evidence="1">
    <location>
        <position position="373"/>
    </location>
</feature>
<accession>B4RS83</accession>
<accession>F2GCM8</accession>
<proteinExistence type="inferred from homology"/>
<gene>
    <name evidence="1" type="primary">atpA</name>
    <name type="ordered locus">MADE_1020460</name>
</gene>
<reference key="1">
    <citation type="journal article" date="2008" name="ISME J.">
        <title>Comparative genomics of two ecotypes of the marine planktonic copiotroph Alteromonas macleodii suggests alternative lifestyles associated with different kinds of particulate organic matter.</title>
        <authorList>
            <person name="Ivars-Martinez E."/>
            <person name="Martin-Cuadrado A.-B."/>
            <person name="D'Auria G."/>
            <person name="Mira A."/>
            <person name="Ferriera S."/>
            <person name="Johnson J."/>
            <person name="Friedman R."/>
            <person name="Rodriguez-Valera F."/>
        </authorList>
    </citation>
    <scope>NUCLEOTIDE SEQUENCE [LARGE SCALE GENOMIC DNA]</scope>
    <source>
        <strain>DSM 17117 / CIP 110805 / LMG 28347 / Deep ecotype</strain>
    </source>
</reference>
<dbReference type="EC" id="7.1.2.2" evidence="1"/>
<dbReference type="EMBL" id="CP001103">
    <property type="protein sequence ID" value="AEB00215.1"/>
    <property type="molecule type" value="Genomic_DNA"/>
</dbReference>
<dbReference type="RefSeq" id="WP_012520218.1">
    <property type="nucleotide sequence ID" value="NC_011138.3"/>
</dbReference>
<dbReference type="SMR" id="B4RS83"/>
<dbReference type="GeneID" id="56344288"/>
<dbReference type="KEGG" id="amc:MADE_1020460"/>
<dbReference type="HOGENOM" id="CLU_010091_2_1_6"/>
<dbReference type="Proteomes" id="UP000001870">
    <property type="component" value="Chromosome"/>
</dbReference>
<dbReference type="GO" id="GO:0005886">
    <property type="term" value="C:plasma membrane"/>
    <property type="evidence" value="ECO:0007669"/>
    <property type="project" value="UniProtKB-SubCell"/>
</dbReference>
<dbReference type="GO" id="GO:0045259">
    <property type="term" value="C:proton-transporting ATP synthase complex"/>
    <property type="evidence" value="ECO:0007669"/>
    <property type="project" value="UniProtKB-KW"/>
</dbReference>
<dbReference type="GO" id="GO:0043531">
    <property type="term" value="F:ADP binding"/>
    <property type="evidence" value="ECO:0007669"/>
    <property type="project" value="TreeGrafter"/>
</dbReference>
<dbReference type="GO" id="GO:0005524">
    <property type="term" value="F:ATP binding"/>
    <property type="evidence" value="ECO:0007669"/>
    <property type="project" value="UniProtKB-UniRule"/>
</dbReference>
<dbReference type="GO" id="GO:0046933">
    <property type="term" value="F:proton-transporting ATP synthase activity, rotational mechanism"/>
    <property type="evidence" value="ECO:0007669"/>
    <property type="project" value="UniProtKB-UniRule"/>
</dbReference>
<dbReference type="CDD" id="cd18113">
    <property type="entry name" value="ATP-synt_F1_alpha_C"/>
    <property type="match status" value="1"/>
</dbReference>
<dbReference type="CDD" id="cd18116">
    <property type="entry name" value="ATP-synt_F1_alpha_N"/>
    <property type="match status" value="1"/>
</dbReference>
<dbReference type="CDD" id="cd01132">
    <property type="entry name" value="F1-ATPase_alpha_CD"/>
    <property type="match status" value="1"/>
</dbReference>
<dbReference type="FunFam" id="1.20.150.20:FF:000001">
    <property type="entry name" value="ATP synthase subunit alpha"/>
    <property type="match status" value="1"/>
</dbReference>
<dbReference type="FunFam" id="2.40.30.20:FF:000001">
    <property type="entry name" value="ATP synthase subunit alpha"/>
    <property type="match status" value="1"/>
</dbReference>
<dbReference type="FunFam" id="3.40.50.300:FF:000002">
    <property type="entry name" value="ATP synthase subunit alpha"/>
    <property type="match status" value="1"/>
</dbReference>
<dbReference type="Gene3D" id="2.40.30.20">
    <property type="match status" value="1"/>
</dbReference>
<dbReference type="Gene3D" id="1.20.150.20">
    <property type="entry name" value="ATP synthase alpha/beta chain, C-terminal domain"/>
    <property type="match status" value="1"/>
</dbReference>
<dbReference type="Gene3D" id="3.40.50.300">
    <property type="entry name" value="P-loop containing nucleotide triphosphate hydrolases"/>
    <property type="match status" value="1"/>
</dbReference>
<dbReference type="HAMAP" id="MF_01346">
    <property type="entry name" value="ATP_synth_alpha_bact"/>
    <property type="match status" value="1"/>
</dbReference>
<dbReference type="InterPro" id="IPR023366">
    <property type="entry name" value="ATP_synth_asu-like_sf"/>
</dbReference>
<dbReference type="InterPro" id="IPR000793">
    <property type="entry name" value="ATP_synth_asu_C"/>
</dbReference>
<dbReference type="InterPro" id="IPR038376">
    <property type="entry name" value="ATP_synth_asu_C_sf"/>
</dbReference>
<dbReference type="InterPro" id="IPR033732">
    <property type="entry name" value="ATP_synth_F1_a_nt-bd_dom"/>
</dbReference>
<dbReference type="InterPro" id="IPR005294">
    <property type="entry name" value="ATP_synth_F1_asu"/>
</dbReference>
<dbReference type="InterPro" id="IPR020003">
    <property type="entry name" value="ATPase_a/bsu_AS"/>
</dbReference>
<dbReference type="InterPro" id="IPR004100">
    <property type="entry name" value="ATPase_F1/V1/A1_a/bsu_N"/>
</dbReference>
<dbReference type="InterPro" id="IPR036121">
    <property type="entry name" value="ATPase_F1/V1/A1_a/bsu_N_sf"/>
</dbReference>
<dbReference type="InterPro" id="IPR000194">
    <property type="entry name" value="ATPase_F1/V1/A1_a/bsu_nucl-bd"/>
</dbReference>
<dbReference type="InterPro" id="IPR027417">
    <property type="entry name" value="P-loop_NTPase"/>
</dbReference>
<dbReference type="NCBIfam" id="TIGR00962">
    <property type="entry name" value="atpA"/>
    <property type="match status" value="1"/>
</dbReference>
<dbReference type="NCBIfam" id="NF009884">
    <property type="entry name" value="PRK13343.1"/>
    <property type="match status" value="1"/>
</dbReference>
<dbReference type="PANTHER" id="PTHR48082">
    <property type="entry name" value="ATP SYNTHASE SUBUNIT ALPHA, MITOCHONDRIAL"/>
    <property type="match status" value="1"/>
</dbReference>
<dbReference type="PANTHER" id="PTHR48082:SF2">
    <property type="entry name" value="ATP SYNTHASE SUBUNIT ALPHA, MITOCHONDRIAL"/>
    <property type="match status" value="1"/>
</dbReference>
<dbReference type="Pfam" id="PF00006">
    <property type="entry name" value="ATP-synt_ab"/>
    <property type="match status" value="1"/>
</dbReference>
<dbReference type="Pfam" id="PF00306">
    <property type="entry name" value="ATP-synt_ab_C"/>
    <property type="match status" value="1"/>
</dbReference>
<dbReference type="Pfam" id="PF02874">
    <property type="entry name" value="ATP-synt_ab_N"/>
    <property type="match status" value="1"/>
</dbReference>
<dbReference type="SUPFAM" id="SSF47917">
    <property type="entry name" value="C-terminal domain of alpha and beta subunits of F1 ATP synthase"/>
    <property type="match status" value="1"/>
</dbReference>
<dbReference type="SUPFAM" id="SSF50615">
    <property type="entry name" value="N-terminal domain of alpha and beta subunits of F1 ATP synthase"/>
    <property type="match status" value="1"/>
</dbReference>
<dbReference type="SUPFAM" id="SSF52540">
    <property type="entry name" value="P-loop containing nucleoside triphosphate hydrolases"/>
    <property type="match status" value="1"/>
</dbReference>
<dbReference type="PROSITE" id="PS00152">
    <property type="entry name" value="ATPASE_ALPHA_BETA"/>
    <property type="match status" value="1"/>
</dbReference>
<evidence type="ECO:0000255" key="1">
    <source>
        <dbReference type="HAMAP-Rule" id="MF_01346"/>
    </source>
</evidence>